<proteinExistence type="inferred from homology"/>
<accession>B5R3B5</accession>
<keyword id="KW-0963">Cytoplasm</keyword>
<keyword id="KW-0238">DNA-binding</keyword>
<keyword id="KW-0678">Repressor</keyword>
<keyword id="KW-0804">Transcription</keyword>
<keyword id="KW-0805">Transcription regulation</keyword>
<organism>
    <name type="scientific">Salmonella enteritidis PT4 (strain P125109)</name>
    <dbReference type="NCBI Taxonomy" id="550537"/>
    <lineage>
        <taxon>Bacteria</taxon>
        <taxon>Pseudomonadati</taxon>
        <taxon>Pseudomonadota</taxon>
        <taxon>Gammaproteobacteria</taxon>
        <taxon>Enterobacterales</taxon>
        <taxon>Enterobacteriaceae</taxon>
        <taxon>Salmonella</taxon>
    </lineage>
</organism>
<feature type="chain" id="PRO_1000197153" description="Trp operon repressor">
    <location>
        <begin position="1"/>
        <end position="108"/>
    </location>
</feature>
<feature type="DNA-binding region" evidence="1">
    <location>
        <begin position="68"/>
        <end position="91"/>
    </location>
</feature>
<comment type="function">
    <text evidence="1">This protein is an aporepressor. When complexed with L-tryptophan it binds the operator region of the trp operon (5'-ACTAGT-'3') and prevents the initiation of transcription. The complex also regulates trp repressor biosynthesis by binding to its regulatory region.</text>
</comment>
<comment type="subunit">
    <text evidence="1">Homodimer.</text>
</comment>
<comment type="subcellular location">
    <subcellularLocation>
        <location evidence="1">Cytoplasm</location>
    </subcellularLocation>
</comment>
<comment type="similarity">
    <text evidence="1">Belongs to the TrpR family.</text>
</comment>
<sequence length="108" mass="12410">MTQRSPYSSAIAEQRNQEWLRFVELLRQAYAEDLHLPLLQLMLTPDEREALGTRVRIIEELLRGEMSQRELKTELGAGIATITRGSNSLKSAPVELRHWLENVLLKNA</sequence>
<dbReference type="EMBL" id="AM933172">
    <property type="protein sequence ID" value="CAR35892.1"/>
    <property type="molecule type" value="Genomic_DNA"/>
</dbReference>
<dbReference type="RefSeq" id="WP_000194249.1">
    <property type="nucleotide sequence ID" value="NC_011294.1"/>
</dbReference>
<dbReference type="SMR" id="B5R3B5"/>
<dbReference type="KEGG" id="set:SEN4339"/>
<dbReference type="HOGENOM" id="CLU_147939_0_0_6"/>
<dbReference type="Proteomes" id="UP000000613">
    <property type="component" value="Chromosome"/>
</dbReference>
<dbReference type="GO" id="GO:0005737">
    <property type="term" value="C:cytoplasm"/>
    <property type="evidence" value="ECO:0007669"/>
    <property type="project" value="UniProtKB-SubCell"/>
</dbReference>
<dbReference type="GO" id="GO:0003700">
    <property type="term" value="F:DNA-binding transcription factor activity"/>
    <property type="evidence" value="ECO:0007669"/>
    <property type="project" value="InterPro"/>
</dbReference>
<dbReference type="GO" id="GO:0043565">
    <property type="term" value="F:sequence-specific DNA binding"/>
    <property type="evidence" value="ECO:0007669"/>
    <property type="project" value="InterPro"/>
</dbReference>
<dbReference type="GO" id="GO:0045892">
    <property type="term" value="P:negative regulation of DNA-templated transcription"/>
    <property type="evidence" value="ECO:0007669"/>
    <property type="project" value="UniProtKB-UniRule"/>
</dbReference>
<dbReference type="FunFam" id="1.10.1270.10:FF:000001">
    <property type="entry name" value="Trp operon repressor"/>
    <property type="match status" value="1"/>
</dbReference>
<dbReference type="Gene3D" id="1.10.1270.10">
    <property type="entry name" value="TrpR-like"/>
    <property type="match status" value="1"/>
</dbReference>
<dbReference type="HAMAP" id="MF_00475">
    <property type="entry name" value="Trp_repressor"/>
    <property type="match status" value="1"/>
</dbReference>
<dbReference type="InterPro" id="IPR000831">
    <property type="entry name" value="Trp_repress"/>
</dbReference>
<dbReference type="InterPro" id="IPR013335">
    <property type="entry name" value="Trp_repress_bac"/>
</dbReference>
<dbReference type="InterPro" id="IPR010921">
    <property type="entry name" value="Trp_repressor/repl_initiator"/>
</dbReference>
<dbReference type="InterPro" id="IPR038116">
    <property type="entry name" value="TrpR-like_sf"/>
</dbReference>
<dbReference type="NCBIfam" id="TIGR01321">
    <property type="entry name" value="TrpR"/>
    <property type="match status" value="1"/>
</dbReference>
<dbReference type="PANTHER" id="PTHR38025">
    <property type="entry name" value="TRP OPERON REPRESSOR"/>
    <property type="match status" value="1"/>
</dbReference>
<dbReference type="PANTHER" id="PTHR38025:SF1">
    <property type="entry name" value="TRP OPERON REPRESSOR"/>
    <property type="match status" value="1"/>
</dbReference>
<dbReference type="Pfam" id="PF01371">
    <property type="entry name" value="Trp_repressor"/>
    <property type="match status" value="1"/>
</dbReference>
<dbReference type="PIRSF" id="PIRSF003196">
    <property type="entry name" value="Trp_repressor"/>
    <property type="match status" value="1"/>
</dbReference>
<dbReference type="SUPFAM" id="SSF48295">
    <property type="entry name" value="TrpR-like"/>
    <property type="match status" value="1"/>
</dbReference>
<protein>
    <recommendedName>
        <fullName evidence="1">Trp operon repressor</fullName>
    </recommendedName>
</protein>
<gene>
    <name evidence="1" type="primary">trpR</name>
    <name type="ordered locus">SEN4339</name>
</gene>
<reference key="1">
    <citation type="journal article" date="2008" name="Genome Res.">
        <title>Comparative genome analysis of Salmonella enteritidis PT4 and Salmonella gallinarum 287/91 provides insights into evolutionary and host adaptation pathways.</title>
        <authorList>
            <person name="Thomson N.R."/>
            <person name="Clayton D.J."/>
            <person name="Windhorst D."/>
            <person name="Vernikos G."/>
            <person name="Davidson S."/>
            <person name="Churcher C."/>
            <person name="Quail M.A."/>
            <person name="Stevens M."/>
            <person name="Jones M.A."/>
            <person name="Watson M."/>
            <person name="Barron A."/>
            <person name="Layton A."/>
            <person name="Pickard D."/>
            <person name="Kingsley R.A."/>
            <person name="Bignell A."/>
            <person name="Clark L."/>
            <person name="Harris B."/>
            <person name="Ormond D."/>
            <person name="Abdellah Z."/>
            <person name="Brooks K."/>
            <person name="Cherevach I."/>
            <person name="Chillingworth T."/>
            <person name="Woodward J."/>
            <person name="Norberczak H."/>
            <person name="Lord A."/>
            <person name="Arrowsmith C."/>
            <person name="Jagels K."/>
            <person name="Moule S."/>
            <person name="Mungall K."/>
            <person name="Saunders M."/>
            <person name="Whitehead S."/>
            <person name="Chabalgoity J.A."/>
            <person name="Maskell D."/>
            <person name="Humphreys T."/>
            <person name="Roberts M."/>
            <person name="Barrow P.A."/>
            <person name="Dougan G."/>
            <person name="Parkhill J."/>
        </authorList>
    </citation>
    <scope>NUCLEOTIDE SEQUENCE [LARGE SCALE GENOMIC DNA]</scope>
    <source>
        <strain>P125109</strain>
    </source>
</reference>
<name>TRPR_SALEP</name>
<evidence type="ECO:0000255" key="1">
    <source>
        <dbReference type="HAMAP-Rule" id="MF_00475"/>
    </source>
</evidence>